<keyword id="KW-0648">Protein biosynthesis</keyword>
<keyword id="KW-0808">Transferase</keyword>
<gene>
    <name evidence="1" type="primary">fmt</name>
    <name type="ordered locus">FTM_0883</name>
</gene>
<protein>
    <recommendedName>
        <fullName evidence="1">Methionyl-tRNA formyltransferase</fullName>
        <ecNumber evidence="1">2.1.2.9</ecNumber>
    </recommendedName>
</protein>
<organism>
    <name type="scientific">Francisella tularensis subsp. mediasiatica (strain FSC147)</name>
    <dbReference type="NCBI Taxonomy" id="441952"/>
    <lineage>
        <taxon>Bacteria</taxon>
        <taxon>Pseudomonadati</taxon>
        <taxon>Pseudomonadota</taxon>
        <taxon>Gammaproteobacteria</taxon>
        <taxon>Thiotrichales</taxon>
        <taxon>Francisellaceae</taxon>
        <taxon>Francisella</taxon>
    </lineage>
</organism>
<sequence>MKKLNIIFAGTPDISAQVLKDLYKSQYNIQAVLTQPDRAKGRGKKVQFSPVKEVALANHTPVFQPLSFKKNPEVLEQIKQLKPDVIVVIAYGIIVPQEFLDIPRYGCLNIHVSLLPKWRGAAPIQRAIQAGDTKTGVCIMQMDAGLDTGDILNTLEIEIQETDTSQTLHDKFAKLSIKPLLETLEKIEIIKPEPQQGEPTYAHKITKQEGLIDFTKSAWQISCHIRAFTPWPGAYFILDDEAIKVGEFEILYQNTDNRKAGTIIDIYRSGFDIATSDKIIRFRQLQFPNKKMLNIVDILNGKDLDKYIGYKLG</sequence>
<accession>B2SGG5</accession>
<name>FMT_FRATM</name>
<evidence type="ECO:0000255" key="1">
    <source>
        <dbReference type="HAMAP-Rule" id="MF_00182"/>
    </source>
</evidence>
<proteinExistence type="inferred from homology"/>
<feature type="chain" id="PRO_1000098406" description="Methionyl-tRNA formyltransferase">
    <location>
        <begin position="1"/>
        <end position="313"/>
    </location>
</feature>
<feature type="binding site" evidence="1">
    <location>
        <begin position="113"/>
        <end position="116"/>
    </location>
    <ligand>
        <name>(6S)-5,6,7,8-tetrahydrofolate</name>
        <dbReference type="ChEBI" id="CHEBI:57453"/>
    </ligand>
</feature>
<dbReference type="EC" id="2.1.2.9" evidence="1"/>
<dbReference type="EMBL" id="CP000915">
    <property type="protein sequence ID" value="ACD30824.1"/>
    <property type="molecule type" value="Genomic_DNA"/>
</dbReference>
<dbReference type="SMR" id="B2SGG5"/>
<dbReference type="KEGG" id="ftm:FTM_0883"/>
<dbReference type="HOGENOM" id="CLU_033347_1_2_6"/>
<dbReference type="GO" id="GO:0005829">
    <property type="term" value="C:cytosol"/>
    <property type="evidence" value="ECO:0007669"/>
    <property type="project" value="TreeGrafter"/>
</dbReference>
<dbReference type="GO" id="GO:0004479">
    <property type="term" value="F:methionyl-tRNA formyltransferase activity"/>
    <property type="evidence" value="ECO:0007669"/>
    <property type="project" value="UniProtKB-UniRule"/>
</dbReference>
<dbReference type="CDD" id="cd08646">
    <property type="entry name" value="FMT_core_Met-tRNA-FMT_N"/>
    <property type="match status" value="1"/>
</dbReference>
<dbReference type="CDD" id="cd08704">
    <property type="entry name" value="Met_tRNA_FMT_C"/>
    <property type="match status" value="1"/>
</dbReference>
<dbReference type="Gene3D" id="3.40.50.12230">
    <property type="match status" value="1"/>
</dbReference>
<dbReference type="HAMAP" id="MF_00182">
    <property type="entry name" value="Formyl_trans"/>
    <property type="match status" value="1"/>
</dbReference>
<dbReference type="InterPro" id="IPR005794">
    <property type="entry name" value="Fmt"/>
</dbReference>
<dbReference type="InterPro" id="IPR005793">
    <property type="entry name" value="Formyl_trans_C"/>
</dbReference>
<dbReference type="InterPro" id="IPR002376">
    <property type="entry name" value="Formyl_transf_N"/>
</dbReference>
<dbReference type="InterPro" id="IPR036477">
    <property type="entry name" value="Formyl_transf_N_sf"/>
</dbReference>
<dbReference type="InterPro" id="IPR011034">
    <property type="entry name" value="Formyl_transferase-like_C_sf"/>
</dbReference>
<dbReference type="InterPro" id="IPR001555">
    <property type="entry name" value="GART_AS"/>
</dbReference>
<dbReference type="InterPro" id="IPR044135">
    <property type="entry name" value="Met-tRNA-FMT_C"/>
</dbReference>
<dbReference type="InterPro" id="IPR041711">
    <property type="entry name" value="Met-tRNA-FMT_N"/>
</dbReference>
<dbReference type="NCBIfam" id="TIGR00460">
    <property type="entry name" value="fmt"/>
    <property type="match status" value="1"/>
</dbReference>
<dbReference type="PANTHER" id="PTHR11138">
    <property type="entry name" value="METHIONYL-TRNA FORMYLTRANSFERASE"/>
    <property type="match status" value="1"/>
</dbReference>
<dbReference type="PANTHER" id="PTHR11138:SF5">
    <property type="entry name" value="METHIONYL-TRNA FORMYLTRANSFERASE, MITOCHONDRIAL"/>
    <property type="match status" value="1"/>
</dbReference>
<dbReference type="Pfam" id="PF02911">
    <property type="entry name" value="Formyl_trans_C"/>
    <property type="match status" value="1"/>
</dbReference>
<dbReference type="Pfam" id="PF00551">
    <property type="entry name" value="Formyl_trans_N"/>
    <property type="match status" value="1"/>
</dbReference>
<dbReference type="SUPFAM" id="SSF50486">
    <property type="entry name" value="FMT C-terminal domain-like"/>
    <property type="match status" value="1"/>
</dbReference>
<dbReference type="SUPFAM" id="SSF53328">
    <property type="entry name" value="Formyltransferase"/>
    <property type="match status" value="1"/>
</dbReference>
<dbReference type="PROSITE" id="PS00373">
    <property type="entry name" value="GART"/>
    <property type="match status" value="1"/>
</dbReference>
<reference key="1">
    <citation type="journal article" date="2009" name="PLoS Pathog.">
        <title>Molecular evolutionary consequences of niche restriction in Francisella tularensis, a facultative intracellular pathogen.</title>
        <authorList>
            <person name="Larsson P."/>
            <person name="Elfsmark D."/>
            <person name="Svensson K."/>
            <person name="Wikstroem P."/>
            <person name="Forsman M."/>
            <person name="Brettin T."/>
            <person name="Keim P."/>
            <person name="Johansson A."/>
        </authorList>
    </citation>
    <scope>NUCLEOTIDE SEQUENCE [LARGE SCALE GENOMIC DNA]</scope>
    <source>
        <strain>FSC147</strain>
    </source>
</reference>
<comment type="function">
    <text evidence="1">Attaches a formyl group to the free amino group of methionyl-tRNA(fMet). The formyl group appears to play a dual role in the initiator identity of N-formylmethionyl-tRNA by promoting its recognition by IF2 and preventing the misappropriation of this tRNA by the elongation apparatus.</text>
</comment>
<comment type="catalytic activity">
    <reaction evidence="1">
        <text>L-methionyl-tRNA(fMet) + (6R)-10-formyltetrahydrofolate = N-formyl-L-methionyl-tRNA(fMet) + (6S)-5,6,7,8-tetrahydrofolate + H(+)</text>
        <dbReference type="Rhea" id="RHEA:24380"/>
        <dbReference type="Rhea" id="RHEA-COMP:9952"/>
        <dbReference type="Rhea" id="RHEA-COMP:9953"/>
        <dbReference type="ChEBI" id="CHEBI:15378"/>
        <dbReference type="ChEBI" id="CHEBI:57453"/>
        <dbReference type="ChEBI" id="CHEBI:78530"/>
        <dbReference type="ChEBI" id="CHEBI:78844"/>
        <dbReference type="ChEBI" id="CHEBI:195366"/>
        <dbReference type="EC" id="2.1.2.9"/>
    </reaction>
</comment>
<comment type="similarity">
    <text evidence="1">Belongs to the Fmt family.</text>
</comment>